<organism>
    <name type="scientific">Clostridium kluyveri (strain ATCC 8527 / DSM 555 / NBRC 12016 / NCIMB 10680 / K1)</name>
    <dbReference type="NCBI Taxonomy" id="431943"/>
    <lineage>
        <taxon>Bacteria</taxon>
        <taxon>Bacillati</taxon>
        <taxon>Bacillota</taxon>
        <taxon>Clostridia</taxon>
        <taxon>Eubacteriales</taxon>
        <taxon>Clostridiaceae</taxon>
        <taxon>Clostridium</taxon>
    </lineage>
</organism>
<dbReference type="EC" id="4.2.1.20" evidence="1"/>
<dbReference type="EMBL" id="CP000673">
    <property type="protein sequence ID" value="EDK33321.1"/>
    <property type="molecule type" value="Genomic_DNA"/>
</dbReference>
<dbReference type="SMR" id="A5N7P0"/>
<dbReference type="STRING" id="431943.CKL_1279"/>
<dbReference type="KEGG" id="ckl:CKL_1279"/>
<dbReference type="eggNOG" id="COG0133">
    <property type="taxonomic scope" value="Bacteria"/>
</dbReference>
<dbReference type="HOGENOM" id="CLU_016734_3_1_9"/>
<dbReference type="UniPathway" id="UPA00035">
    <property type="reaction ID" value="UER00044"/>
</dbReference>
<dbReference type="Proteomes" id="UP000002411">
    <property type="component" value="Chromosome"/>
</dbReference>
<dbReference type="GO" id="GO:0005737">
    <property type="term" value="C:cytoplasm"/>
    <property type="evidence" value="ECO:0007669"/>
    <property type="project" value="TreeGrafter"/>
</dbReference>
<dbReference type="GO" id="GO:0004834">
    <property type="term" value="F:tryptophan synthase activity"/>
    <property type="evidence" value="ECO:0007669"/>
    <property type="project" value="UniProtKB-UniRule"/>
</dbReference>
<dbReference type="CDD" id="cd06446">
    <property type="entry name" value="Trp-synth_B"/>
    <property type="match status" value="1"/>
</dbReference>
<dbReference type="FunFam" id="3.40.50.1100:FF:000001">
    <property type="entry name" value="Tryptophan synthase beta chain"/>
    <property type="match status" value="1"/>
</dbReference>
<dbReference type="FunFam" id="3.40.50.1100:FF:000004">
    <property type="entry name" value="Tryptophan synthase beta chain"/>
    <property type="match status" value="1"/>
</dbReference>
<dbReference type="Gene3D" id="3.40.50.1100">
    <property type="match status" value="2"/>
</dbReference>
<dbReference type="HAMAP" id="MF_00133">
    <property type="entry name" value="Trp_synth_beta"/>
    <property type="match status" value="1"/>
</dbReference>
<dbReference type="InterPro" id="IPR006653">
    <property type="entry name" value="Trp_synth_b_CS"/>
</dbReference>
<dbReference type="InterPro" id="IPR006654">
    <property type="entry name" value="Trp_synth_beta"/>
</dbReference>
<dbReference type="InterPro" id="IPR023026">
    <property type="entry name" value="Trp_synth_beta/beta-like"/>
</dbReference>
<dbReference type="InterPro" id="IPR001926">
    <property type="entry name" value="TrpB-like_PALP"/>
</dbReference>
<dbReference type="InterPro" id="IPR036052">
    <property type="entry name" value="TrpB-like_PALP_sf"/>
</dbReference>
<dbReference type="NCBIfam" id="TIGR00263">
    <property type="entry name" value="trpB"/>
    <property type="match status" value="1"/>
</dbReference>
<dbReference type="PANTHER" id="PTHR48077:SF3">
    <property type="entry name" value="TRYPTOPHAN SYNTHASE"/>
    <property type="match status" value="1"/>
</dbReference>
<dbReference type="PANTHER" id="PTHR48077">
    <property type="entry name" value="TRYPTOPHAN SYNTHASE-RELATED"/>
    <property type="match status" value="1"/>
</dbReference>
<dbReference type="Pfam" id="PF00291">
    <property type="entry name" value="PALP"/>
    <property type="match status" value="1"/>
</dbReference>
<dbReference type="PIRSF" id="PIRSF001413">
    <property type="entry name" value="Trp_syn_beta"/>
    <property type="match status" value="1"/>
</dbReference>
<dbReference type="SUPFAM" id="SSF53686">
    <property type="entry name" value="Tryptophan synthase beta subunit-like PLP-dependent enzymes"/>
    <property type="match status" value="1"/>
</dbReference>
<dbReference type="PROSITE" id="PS00168">
    <property type="entry name" value="TRP_SYNTHASE_BETA"/>
    <property type="match status" value="1"/>
</dbReference>
<accession>A5N7P0</accession>
<proteinExistence type="inferred from homology"/>
<feature type="chain" id="PRO_1000117752" description="Tryptophan synthase beta chain">
    <location>
        <begin position="1"/>
        <end position="396"/>
    </location>
</feature>
<feature type="modified residue" description="N6-(pyridoxal phosphate)lysine" evidence="1">
    <location>
        <position position="90"/>
    </location>
</feature>
<reference key="1">
    <citation type="journal article" date="2008" name="Proc. Natl. Acad. Sci. U.S.A.">
        <title>The genome of Clostridium kluyveri, a strict anaerobe with unique metabolic features.</title>
        <authorList>
            <person name="Seedorf H."/>
            <person name="Fricke W.F."/>
            <person name="Veith B."/>
            <person name="Brueggemann H."/>
            <person name="Liesegang H."/>
            <person name="Strittmatter A."/>
            <person name="Miethke M."/>
            <person name="Buckel W."/>
            <person name="Hinderberger J."/>
            <person name="Li F."/>
            <person name="Hagemeier C."/>
            <person name="Thauer R.K."/>
            <person name="Gottschalk G."/>
        </authorList>
    </citation>
    <scope>NUCLEOTIDE SEQUENCE [LARGE SCALE GENOMIC DNA]</scope>
    <source>
        <strain>ATCC 8527 / DSM 555 / NBRC 12016 / NCIMB 10680 / K1</strain>
    </source>
</reference>
<gene>
    <name evidence="1" type="primary">trpB</name>
    <name type="ordered locus">CKL_1279</name>
</gene>
<comment type="function">
    <text evidence="1">The beta subunit is responsible for the synthesis of L-tryptophan from indole and L-serine.</text>
</comment>
<comment type="catalytic activity">
    <reaction evidence="1">
        <text>(1S,2R)-1-C-(indol-3-yl)glycerol 3-phosphate + L-serine = D-glyceraldehyde 3-phosphate + L-tryptophan + H2O</text>
        <dbReference type="Rhea" id="RHEA:10532"/>
        <dbReference type="ChEBI" id="CHEBI:15377"/>
        <dbReference type="ChEBI" id="CHEBI:33384"/>
        <dbReference type="ChEBI" id="CHEBI:57912"/>
        <dbReference type="ChEBI" id="CHEBI:58866"/>
        <dbReference type="ChEBI" id="CHEBI:59776"/>
        <dbReference type="EC" id="4.2.1.20"/>
    </reaction>
</comment>
<comment type="cofactor">
    <cofactor evidence="1">
        <name>pyridoxal 5'-phosphate</name>
        <dbReference type="ChEBI" id="CHEBI:597326"/>
    </cofactor>
</comment>
<comment type="pathway">
    <text evidence="1">Amino-acid biosynthesis; L-tryptophan biosynthesis; L-tryptophan from chorismate: step 5/5.</text>
</comment>
<comment type="subunit">
    <text evidence="1">Tetramer of two alpha and two beta chains.</text>
</comment>
<comment type="similarity">
    <text evidence="1">Belongs to the TrpB family.</text>
</comment>
<sequence length="396" mass="43647">MNKSYENSGRFGRFGGQYVPETVMTALMELEESFNKAKEDSKFIDEYMYYLQEYSGRPTPLYYAENLTKNLGGAKIYLKREDLNHTGAHKINNVLGQILLAKRMGKKKVIAETGAGQHGVAVATGAAMFQMECVIYMGEEDCRRQSLNVLRMKILGAKVVSVESGTKTLKDAVNEALRKWVENIEDTFYVMGSVVGPHPYPTMVRDFQRIIGDETKEQILKKEGKLPNYIIACVGGGSNSMGIFYPFVEDKSVKLIGVEAAGLGVDTDKHAASMAKGSVGVLHGMMTYLIQDDEGQILPVYSVSAGLDYPGVGPEHAYLKDTKRAEYTYVTDQEALDAFGYLSRCEGIIPALESSHALAYTMKLAPELSKEEIVVVNISGRGDKDVDTISELNIFG</sequence>
<keyword id="KW-0028">Amino-acid biosynthesis</keyword>
<keyword id="KW-0057">Aromatic amino acid biosynthesis</keyword>
<keyword id="KW-0456">Lyase</keyword>
<keyword id="KW-0663">Pyridoxal phosphate</keyword>
<keyword id="KW-1185">Reference proteome</keyword>
<keyword id="KW-0822">Tryptophan biosynthesis</keyword>
<protein>
    <recommendedName>
        <fullName evidence="1">Tryptophan synthase beta chain</fullName>
        <ecNumber evidence="1">4.2.1.20</ecNumber>
    </recommendedName>
</protein>
<evidence type="ECO:0000255" key="1">
    <source>
        <dbReference type="HAMAP-Rule" id="MF_00133"/>
    </source>
</evidence>
<name>TRPB_CLOK5</name>